<dbReference type="EMBL" id="AM745088">
    <property type="protein sequence ID" value="CAN87010.1"/>
    <property type="molecule type" value="mRNA"/>
</dbReference>
<dbReference type="GO" id="GO:0005576">
    <property type="term" value="C:extracellular region"/>
    <property type="evidence" value="ECO:0007669"/>
    <property type="project" value="UniProtKB-SubCell"/>
</dbReference>
<dbReference type="GO" id="GO:0042742">
    <property type="term" value="P:defense response to bacterium"/>
    <property type="evidence" value="ECO:0007669"/>
    <property type="project" value="UniProtKB-KW"/>
</dbReference>
<dbReference type="GO" id="GO:0050832">
    <property type="term" value="P:defense response to fungus"/>
    <property type="evidence" value="ECO:0007669"/>
    <property type="project" value="UniProtKB-KW"/>
</dbReference>
<dbReference type="GO" id="GO:0031640">
    <property type="term" value="P:killing of cells of another organism"/>
    <property type="evidence" value="ECO:0007669"/>
    <property type="project" value="UniProtKB-KW"/>
</dbReference>
<dbReference type="InterPro" id="IPR012520">
    <property type="entry name" value="Antimicrobial_frog_1"/>
</dbReference>
<dbReference type="InterPro" id="IPR004275">
    <property type="entry name" value="Frog_antimicrobial_propeptide"/>
</dbReference>
<dbReference type="Pfam" id="PF08018">
    <property type="entry name" value="Antimicrobial_1"/>
    <property type="match status" value="1"/>
</dbReference>
<dbReference type="Pfam" id="PF03032">
    <property type="entry name" value="FSAP_sig_propep"/>
    <property type="match status" value="1"/>
</dbReference>
<protein>
    <recommendedName>
        <fullName evidence="4 5">Brevinin-1PLc</fullName>
    </recommendedName>
</protein>
<name>BR1C_LITPA</name>
<reference evidence="7" key="1">
    <citation type="journal article" date="2007" name="Peptides">
        <title>Rapid identification of precursor cDNAs encoding five structural classes of antimicrobial peptides from pickerel frog (Rana palustris) skin secretion by single step 'shotgun' cloning.</title>
        <authorList>
            <person name="Zhou M."/>
            <person name="Wang L."/>
            <person name="Owens D.E."/>
            <person name="Chen T."/>
            <person name="Walker B."/>
            <person name="Shaw C."/>
        </authorList>
    </citation>
    <scope>NUCLEOTIDE SEQUENCE [MRNA]</scope>
    <source>
        <tissue evidence="3">Skin secretion</tissue>
    </source>
</reference>
<reference evidence="6" key="2">
    <citation type="journal article" date="2000" name="Biochim. Biophys. Acta">
        <title>Multiple antimicrobial peptides and peptides related to bradykinin and neuromedin N isolated from skin secretions of the pickerel frog, Rana palustris.</title>
        <authorList>
            <person name="Basir Y.J."/>
            <person name="Knoop F.C."/>
            <person name="Dulka J."/>
            <person name="Conlon J.M."/>
        </authorList>
    </citation>
    <scope>PROTEIN SEQUENCE OF 47-70</scope>
    <scope>FUNCTION</scope>
    <scope>SUBCELLULAR LOCATION</scope>
    <scope>TISSUE SPECIFICITY</scope>
    <scope>MASS SPECTROMETRY</scope>
    <scope>DISULFIDE BOND</scope>
    <source>
        <tissue evidence="2">Skin secretion</tissue>
    </source>
</reference>
<proteinExistence type="evidence at protein level"/>
<sequence>MFTLKKSMLLLFFLGTINLSLCEEERNAEEERRDEPDEMDVEVEKRFLPVIAGVAAKFLPKIFCAITKKC</sequence>
<keyword id="KW-0878">Amphibian defense peptide</keyword>
<keyword id="KW-0044">Antibiotic</keyword>
<keyword id="KW-0929">Antimicrobial</keyword>
<keyword id="KW-0165">Cleavage on pair of basic residues</keyword>
<keyword id="KW-0903">Direct protein sequencing</keyword>
<keyword id="KW-1015">Disulfide bond</keyword>
<keyword id="KW-0295">Fungicide</keyword>
<keyword id="KW-0964">Secreted</keyword>
<keyword id="KW-0732">Signal</keyword>
<organism>
    <name type="scientific">Lithobates palustris</name>
    <name type="common">Pickerel frog</name>
    <name type="synonym">Rana palustris</name>
    <dbReference type="NCBI Taxonomy" id="298395"/>
    <lineage>
        <taxon>Eukaryota</taxon>
        <taxon>Metazoa</taxon>
        <taxon>Chordata</taxon>
        <taxon>Craniata</taxon>
        <taxon>Vertebrata</taxon>
        <taxon>Euteleostomi</taxon>
        <taxon>Amphibia</taxon>
        <taxon>Batrachia</taxon>
        <taxon>Anura</taxon>
        <taxon>Neobatrachia</taxon>
        <taxon>Ranoidea</taxon>
        <taxon>Ranidae</taxon>
        <taxon>Lithobates</taxon>
    </lineage>
</organism>
<evidence type="ECO:0000255" key="1"/>
<evidence type="ECO:0000269" key="2">
    <source>
    </source>
</evidence>
<evidence type="ECO:0000269" key="3">
    <source>
    </source>
</evidence>
<evidence type="ECO:0000303" key="4">
    <source>
    </source>
</evidence>
<evidence type="ECO:0000303" key="5">
    <source>
    </source>
</evidence>
<evidence type="ECO:0000305" key="6"/>
<evidence type="ECO:0000312" key="7">
    <source>
        <dbReference type="EMBL" id="CAN87010.1"/>
    </source>
</evidence>
<accession>A7WNV4</accession>
<feature type="signal peptide" evidence="1">
    <location>
        <begin position="1"/>
        <end position="22"/>
    </location>
</feature>
<feature type="propeptide" id="PRO_5000271596" evidence="1">
    <location>
        <begin position="23"/>
        <end position="44"/>
    </location>
</feature>
<feature type="peptide" id="PRO_5000271597" description="Brevinin-1PLc" evidence="2">
    <location>
        <begin position="47"/>
        <end position="70"/>
    </location>
</feature>
<feature type="disulfide bond" evidence="2">
    <location>
        <begin position="64"/>
        <end position="70"/>
    </location>
</feature>
<comment type="function">
    <text evidence="2">Antimicrobial activity against the Gram-negative bacterium E.coli, the Gram-positive bacterium S.aureus and the yeast C.albicans.</text>
</comment>
<comment type="subcellular location">
    <subcellularLocation>
        <location evidence="2">Secreted</location>
    </subcellularLocation>
</comment>
<comment type="tissue specificity">
    <text evidence="2">Expressed by the skin glands.</text>
</comment>
<comment type="mass spectrometry"/>
<comment type="similarity">
    <text evidence="1">Belongs to the frog skin active peptide (FSAP) family. Brevinin subfamily.</text>
</comment>